<sequence>MDDLENNIFNSVEEEILYWKSVAMKYKQCSEEAQQELQEFQEASREYEAELEAQLLQTEGRNRDLFSENNRLRMELDAIKEKYEEQHSENYVQISTLEGDLSQTKAVRDQLQKYIRELEQANDDLERAKRATIMSLEDFEQRLNQAIERNAFLENELDEKENLLESVQRLKDEARDLRQELAVQQKQEKPKSNMVSPETERMDTSVQASIAIPSAPLTPLSQRGCASTLTSPLSFRTSLDDGYSGTPLTPCARISALNIVGDLLRKVGALESKLASCRNFVHEQSPNRPLTSVSARMKKTREGIENRLSIASGSSVEKGLIKRLEFGSFPSNTPMQGMHSPQGVVKMII</sequence>
<organism>
    <name type="scientific">Xenopus laevis</name>
    <name type="common">African clawed frog</name>
    <dbReference type="NCBI Taxonomy" id="8355"/>
    <lineage>
        <taxon>Eukaryota</taxon>
        <taxon>Metazoa</taxon>
        <taxon>Chordata</taxon>
        <taxon>Craniata</taxon>
        <taxon>Vertebrata</taxon>
        <taxon>Euteleostomi</taxon>
        <taxon>Amphibia</taxon>
        <taxon>Batrachia</taxon>
        <taxon>Anura</taxon>
        <taxon>Pipoidea</taxon>
        <taxon>Pipidae</taxon>
        <taxon>Xenopodinae</taxon>
        <taxon>Xenopus</taxon>
        <taxon>Xenopus</taxon>
    </lineage>
</organism>
<accession>Q66J96</accession>
<accession>O13025</accession>
<proteinExistence type="evidence at protein level"/>
<protein>
    <recommendedName>
        <fullName>Nuclear distribution protein nudE homolog 1-A</fullName>
    </recommendedName>
    <alternativeName>
        <fullName>Mitotic phosphoprotein 43</fullName>
        <shortName>MP43</shortName>
    </alternativeName>
</protein>
<reference key="1">
    <citation type="journal article" date="1997" name="Curr. Biol.">
        <title>Systematic identification of mitotic phosphoproteins.</title>
        <authorList>
            <person name="Stukenberg P.T."/>
            <person name="Lustig K.D."/>
            <person name="McGarry T.J."/>
            <person name="King R.W."/>
            <person name="Kuang J."/>
            <person name="Kirschner M.W."/>
        </authorList>
    </citation>
    <scope>NUCLEOTIDE SEQUENCE [MRNA]</scope>
    <scope>PHOSPHORYLATION</scope>
</reference>
<reference key="2">
    <citation type="submission" date="2004-08" db="EMBL/GenBank/DDBJ databases">
        <authorList>
            <consortium name="NIH - Xenopus Gene Collection (XGC) project"/>
        </authorList>
    </citation>
    <scope>NUCLEOTIDE SEQUENCE [LARGE SCALE MRNA]</scope>
    <source>
        <tissue>Embryo</tissue>
    </source>
</reference>
<reference key="3">
    <citation type="journal article" date="2000" name="Neuron">
        <title>LIS1 regulates CNS lamination by interacting with mNudE, a central component of the centrosome.</title>
        <authorList>
            <person name="Feng Y."/>
            <person name="Olson E.C."/>
            <person name="Stukenberg P.T."/>
            <person name="Flanagan L.A."/>
            <person name="Kirschner M.W."/>
            <person name="Walsh C.A."/>
        </authorList>
    </citation>
    <scope>DEVELOPMENTAL STAGE</scope>
</reference>
<comment type="function">
    <text evidence="2">Required for centrosome duplication and formation and function of the mitotic spindle.</text>
</comment>
<comment type="subunit">
    <text evidence="1">Self-associates. Interacts with pafah1b1 (By similarity).</text>
</comment>
<comment type="subcellular location">
    <subcellularLocation>
        <location evidence="1">Cytoplasm</location>
        <location evidence="1">Cytoskeleton</location>
    </subcellularLocation>
    <subcellularLocation>
        <location evidence="1">Cytoplasm</location>
        <location evidence="1">Cytoskeleton</location>
        <location evidence="1">Microtubule organizing center</location>
        <location evidence="1">Centrosome</location>
    </subcellularLocation>
    <subcellularLocation>
        <location evidence="1">Cytoplasm</location>
        <location evidence="1">Cytoskeleton</location>
        <location evidence="1">Spindle</location>
    </subcellularLocation>
    <subcellularLocation>
        <location evidence="1">Chromosome</location>
        <location evidence="1">Centromere</location>
        <location evidence="1">Kinetochore</location>
    </subcellularLocation>
    <subcellularLocation>
        <location evidence="1">Cleavage furrow</location>
    </subcellularLocation>
    <subcellularLocation>
        <location evidence="2">Cytoplasmic vesicle membrane</location>
    </subcellularLocation>
    <text evidence="1">Localizes to the interphase centrosome and to the mitotic spindle.</text>
</comment>
<comment type="developmental stage">
    <text evidence="4">Strongly expressed in the eye, branchial arches and telencephalon of stage 26-33 embryos.</text>
</comment>
<comment type="PTM">
    <text evidence="5">Phosphorylated in mitosis.</text>
</comment>
<comment type="similarity">
    <text evidence="6">Belongs to the nudE family.</text>
</comment>
<comment type="sequence caution" evidence="6">
    <conflict type="erroneous initiation">
        <sequence resource="EMBL-CDS" id="AAC60121"/>
    </conflict>
</comment>
<name>NDE1A_XENLA</name>
<dbReference type="EMBL" id="U95097">
    <property type="protein sequence ID" value="AAC60121.1"/>
    <property type="status" value="ALT_INIT"/>
    <property type="molecule type" value="mRNA"/>
</dbReference>
<dbReference type="EMBL" id="BC081010">
    <property type="protein sequence ID" value="AAH81010.1"/>
    <property type="molecule type" value="mRNA"/>
</dbReference>
<dbReference type="RefSeq" id="NP_001081814.1">
    <property type="nucleotide sequence ID" value="NM_001088345.1"/>
</dbReference>
<dbReference type="SMR" id="Q66J96"/>
<dbReference type="IntAct" id="Q66J96">
    <property type="interactions" value="2"/>
</dbReference>
<dbReference type="DNASU" id="398067"/>
<dbReference type="GeneID" id="398067"/>
<dbReference type="KEGG" id="xla:398067"/>
<dbReference type="AGR" id="Xenbase:XB-GENE-6252032"/>
<dbReference type="CTD" id="398067"/>
<dbReference type="Xenbase" id="XB-GENE-6252032">
    <property type="gene designation" value="nde1.L"/>
</dbReference>
<dbReference type="OMA" id="MVEPTTH"/>
<dbReference type="OrthoDB" id="5877028at2759"/>
<dbReference type="Proteomes" id="UP000186698">
    <property type="component" value="Chromosome 9_10L"/>
</dbReference>
<dbReference type="GO" id="GO:0005813">
    <property type="term" value="C:centrosome"/>
    <property type="evidence" value="ECO:0000318"/>
    <property type="project" value="GO_Central"/>
</dbReference>
<dbReference type="GO" id="GO:0032154">
    <property type="term" value="C:cleavage furrow"/>
    <property type="evidence" value="ECO:0007669"/>
    <property type="project" value="UniProtKB-SubCell"/>
</dbReference>
<dbReference type="GO" id="GO:0030659">
    <property type="term" value="C:cytoplasmic vesicle membrane"/>
    <property type="evidence" value="ECO:0007669"/>
    <property type="project" value="UniProtKB-SubCell"/>
</dbReference>
<dbReference type="GO" id="GO:0005871">
    <property type="term" value="C:kinesin complex"/>
    <property type="evidence" value="ECO:0000318"/>
    <property type="project" value="GO_Central"/>
</dbReference>
<dbReference type="GO" id="GO:0000776">
    <property type="term" value="C:kinetochore"/>
    <property type="evidence" value="ECO:0000318"/>
    <property type="project" value="GO_Central"/>
</dbReference>
<dbReference type="GO" id="GO:0005874">
    <property type="term" value="C:microtubule"/>
    <property type="evidence" value="ECO:0007669"/>
    <property type="project" value="UniProtKB-KW"/>
</dbReference>
<dbReference type="GO" id="GO:0031616">
    <property type="term" value="C:spindle pole centrosome"/>
    <property type="evidence" value="ECO:0000250"/>
    <property type="project" value="UniProtKB"/>
</dbReference>
<dbReference type="GO" id="GO:0008017">
    <property type="term" value="F:microtubule binding"/>
    <property type="evidence" value="ECO:0000250"/>
    <property type="project" value="UniProtKB"/>
</dbReference>
<dbReference type="GO" id="GO:0051301">
    <property type="term" value="P:cell division"/>
    <property type="evidence" value="ECO:0007669"/>
    <property type="project" value="UniProtKB-KW"/>
</dbReference>
<dbReference type="GO" id="GO:0016477">
    <property type="term" value="P:cell migration"/>
    <property type="evidence" value="ECO:0000318"/>
    <property type="project" value="GO_Central"/>
</dbReference>
<dbReference type="GO" id="GO:0051298">
    <property type="term" value="P:centrosome duplication"/>
    <property type="evidence" value="ECO:0000250"/>
    <property type="project" value="UniProtKB"/>
</dbReference>
<dbReference type="GO" id="GO:0051642">
    <property type="term" value="P:centrosome localization"/>
    <property type="evidence" value="ECO:0000318"/>
    <property type="project" value="GO_Central"/>
</dbReference>
<dbReference type="GO" id="GO:0007059">
    <property type="term" value="P:chromosome segregation"/>
    <property type="evidence" value="ECO:0000318"/>
    <property type="project" value="GO_Central"/>
</dbReference>
<dbReference type="GO" id="GO:0051303">
    <property type="term" value="P:establishment of chromosome localization"/>
    <property type="evidence" value="ECO:0000318"/>
    <property type="project" value="GO_Central"/>
</dbReference>
<dbReference type="GO" id="GO:0000132">
    <property type="term" value="P:establishment of mitotic spindle orientation"/>
    <property type="evidence" value="ECO:0000318"/>
    <property type="project" value="GO_Central"/>
</dbReference>
<dbReference type="GO" id="GO:0007020">
    <property type="term" value="P:microtubule nucleation"/>
    <property type="evidence" value="ECO:0000318"/>
    <property type="project" value="GO_Central"/>
</dbReference>
<dbReference type="GO" id="GO:0007100">
    <property type="term" value="P:mitotic centrosome separation"/>
    <property type="evidence" value="ECO:0000318"/>
    <property type="project" value="GO_Central"/>
</dbReference>
<dbReference type="GO" id="GO:0047496">
    <property type="term" value="P:vesicle transport along microtubule"/>
    <property type="evidence" value="ECO:0000318"/>
    <property type="project" value="GO_Central"/>
</dbReference>
<dbReference type="Gene3D" id="6.10.250.1080">
    <property type="match status" value="1"/>
</dbReference>
<dbReference type="InterPro" id="IPR033494">
    <property type="entry name" value="NUDE"/>
</dbReference>
<dbReference type="InterPro" id="IPR006964">
    <property type="entry name" value="NUDE_dom"/>
</dbReference>
<dbReference type="PANTHER" id="PTHR10921">
    <property type="entry name" value="NUCLEAR DISTRIBUTION PROTEIN NUDE HOMOLOG 1"/>
    <property type="match status" value="1"/>
</dbReference>
<dbReference type="PANTHER" id="PTHR10921:SF2">
    <property type="entry name" value="NUCLEAR DISTRIBUTION PROTEIN NUDE HOMOLOG 1"/>
    <property type="match status" value="1"/>
</dbReference>
<dbReference type="Pfam" id="PF04880">
    <property type="entry name" value="NUDE_C"/>
    <property type="match status" value="1"/>
</dbReference>
<keyword id="KW-0131">Cell cycle</keyword>
<keyword id="KW-0132">Cell division</keyword>
<keyword id="KW-0137">Centromere</keyword>
<keyword id="KW-0158">Chromosome</keyword>
<keyword id="KW-0175">Coiled coil</keyword>
<keyword id="KW-0963">Cytoplasm</keyword>
<keyword id="KW-0968">Cytoplasmic vesicle</keyword>
<keyword id="KW-0206">Cytoskeleton</keyword>
<keyword id="KW-0995">Kinetochore</keyword>
<keyword id="KW-0472">Membrane</keyword>
<keyword id="KW-0493">Microtubule</keyword>
<keyword id="KW-0498">Mitosis</keyword>
<keyword id="KW-0597">Phosphoprotein</keyword>
<keyword id="KW-1185">Reference proteome</keyword>
<evidence type="ECO:0000250" key="1"/>
<evidence type="ECO:0000250" key="2">
    <source>
        <dbReference type="UniProtKB" id="Q9NXR1"/>
    </source>
</evidence>
<evidence type="ECO:0000255" key="3"/>
<evidence type="ECO:0000269" key="4">
    <source>
    </source>
</evidence>
<evidence type="ECO:0000269" key="5">
    <source>
    </source>
</evidence>
<evidence type="ECO:0000305" key="6"/>
<feature type="chain" id="PRO_0000240206" description="Nuclear distribution protein nudE homolog 1-A">
    <location>
        <begin position="1"/>
        <end position="349"/>
    </location>
</feature>
<feature type="coiled-coil region" evidence="3">
    <location>
        <begin position="22"/>
        <end position="189"/>
    </location>
</feature>
<gene>
    <name type="primary">nde1-a</name>
</gene>